<evidence type="ECO:0000255" key="1"/>
<evidence type="ECO:0000256" key="2">
    <source>
        <dbReference type="SAM" id="MobiDB-lite"/>
    </source>
</evidence>
<evidence type="ECO:0000269" key="3">
    <source>
    </source>
</evidence>
<evidence type="ECO:0000303" key="4">
    <source>
    </source>
</evidence>
<evidence type="ECO:0000312" key="5">
    <source>
        <dbReference type="HGNC" id="HGNC:44407"/>
    </source>
</evidence>
<comment type="alternative products">
    <event type="alternative splicing"/>
    <isoform>
        <id>I6L899-1</id>
        <name evidence="3">1</name>
        <sequence type="displayed"/>
    </isoform>
    <isoform>
        <id>I6L899-2</id>
        <name evidence="3">2</name>
        <sequence type="described" ref="VSP_044756 VSP_044757 VSP_044758"/>
    </isoform>
</comment>
<comment type="similarity">
    <text evidence="1">Belongs to the GOLGA8 family.</text>
</comment>
<keyword id="KW-0025">Alternative splicing</keyword>
<keyword id="KW-0175">Coiled coil</keyword>
<keyword id="KW-1267">Proteomics identification</keyword>
<keyword id="KW-1185">Reference proteome</keyword>
<feature type="chain" id="PRO_0000420862" description="Golgin subfamily A member 8R">
    <location>
        <begin position="1"/>
        <end position="631"/>
    </location>
</feature>
<feature type="region of interest" description="Disordered" evidence="2">
    <location>
        <begin position="1"/>
        <end position="72"/>
    </location>
</feature>
<feature type="region of interest" description="Disordered" evidence="2">
    <location>
        <begin position="422"/>
        <end position="451"/>
    </location>
</feature>
<feature type="region of interest" description="Disordered" evidence="2">
    <location>
        <begin position="502"/>
        <end position="523"/>
    </location>
</feature>
<feature type="region of interest" description="Disordered" evidence="2">
    <location>
        <begin position="551"/>
        <end position="610"/>
    </location>
</feature>
<feature type="coiled-coil region" evidence="1">
    <location>
        <begin position="85"/>
        <end position="149"/>
    </location>
</feature>
<feature type="coiled-coil region" evidence="1">
    <location>
        <begin position="209"/>
        <end position="247"/>
    </location>
</feature>
<feature type="coiled-coil region" evidence="1">
    <location>
        <begin position="303"/>
        <end position="419"/>
    </location>
</feature>
<feature type="compositionally biased region" description="Polar residues" evidence="2">
    <location>
        <begin position="38"/>
        <end position="50"/>
    </location>
</feature>
<feature type="compositionally biased region" description="Gly residues" evidence="2">
    <location>
        <begin position="507"/>
        <end position="519"/>
    </location>
</feature>
<feature type="compositionally biased region" description="Basic and acidic residues" evidence="2">
    <location>
        <begin position="568"/>
        <end position="577"/>
    </location>
</feature>
<feature type="splice variant" id="VSP_044756" description="In isoform 2." evidence="4">
    <location>
        <begin position="104"/>
        <end position="262"/>
    </location>
</feature>
<feature type="splice variant" id="VSP_044757" description="In isoform 2." evidence="4">
    <original>EHLEVASQQNQQLTAQLSLMALPGEGHGGEHLDSEGEEAPQPMPSVPEDPESRE</original>
    <variation>VKETETSTPSKKGWEAGSSLLGGEVPGQRQLPAWGLVTTAPRRAVLRLFLTSCL</variation>
    <location>
        <begin position="400"/>
        <end position="453"/>
    </location>
</feature>
<feature type="splice variant" id="VSP_044758" description="In isoform 2." evidence="4">
    <location>
        <begin position="454"/>
        <end position="631"/>
    </location>
</feature>
<accession>I6L899</accession>
<accession>F5GYM5</accession>
<reference key="1">
    <citation type="journal article" date="2006" name="Nature">
        <title>Analysis of the DNA sequence and duplication history of human chromosome 15.</title>
        <authorList>
            <person name="Zody M.C."/>
            <person name="Garber M."/>
            <person name="Sharpe T."/>
            <person name="Young S.K."/>
            <person name="Rowen L."/>
            <person name="O'Neill K."/>
            <person name="Whittaker C.A."/>
            <person name="Kamal M."/>
            <person name="Chang J.L."/>
            <person name="Cuomo C.A."/>
            <person name="Dewar K."/>
            <person name="FitzGerald M.G."/>
            <person name="Kodira C.D."/>
            <person name="Madan A."/>
            <person name="Qin S."/>
            <person name="Yang X."/>
            <person name="Abbasi N."/>
            <person name="Abouelleil A."/>
            <person name="Arachchi H.M."/>
            <person name="Baradarani L."/>
            <person name="Birditt B."/>
            <person name="Bloom S."/>
            <person name="Bloom T."/>
            <person name="Borowsky M.L."/>
            <person name="Burke J."/>
            <person name="Butler J."/>
            <person name="Cook A."/>
            <person name="DeArellano K."/>
            <person name="DeCaprio D."/>
            <person name="Dorris L. III"/>
            <person name="Dors M."/>
            <person name="Eichler E.E."/>
            <person name="Engels R."/>
            <person name="Fahey J."/>
            <person name="Fleetwood P."/>
            <person name="Friedman C."/>
            <person name="Gearin G."/>
            <person name="Hall J.L."/>
            <person name="Hensley G."/>
            <person name="Johnson E."/>
            <person name="Jones C."/>
            <person name="Kamat A."/>
            <person name="Kaur A."/>
            <person name="Locke D.P."/>
            <person name="Madan A."/>
            <person name="Munson G."/>
            <person name="Jaffe D.B."/>
            <person name="Lui A."/>
            <person name="Macdonald P."/>
            <person name="Mauceli E."/>
            <person name="Naylor J.W."/>
            <person name="Nesbitt R."/>
            <person name="Nicol R."/>
            <person name="O'Leary S.B."/>
            <person name="Ratcliffe A."/>
            <person name="Rounsley S."/>
            <person name="She X."/>
            <person name="Sneddon K.M.B."/>
            <person name="Stewart S."/>
            <person name="Sougnez C."/>
            <person name="Stone S.M."/>
            <person name="Topham K."/>
            <person name="Vincent D."/>
            <person name="Wang S."/>
            <person name="Zimmer A.R."/>
            <person name="Birren B.W."/>
            <person name="Hood L."/>
            <person name="Lander E.S."/>
            <person name="Nusbaum C."/>
        </authorList>
    </citation>
    <scope>NUCLEOTIDE SEQUENCE [LARGE SCALE GENOMIC DNA]</scope>
</reference>
<proteinExistence type="evidence at protein level"/>
<protein>
    <recommendedName>
        <fullName>Golgin subfamily A member 8R</fullName>
    </recommendedName>
</protein>
<dbReference type="EMBL" id="AC019322">
    <property type="status" value="NOT_ANNOTATED_CDS"/>
    <property type="molecule type" value="Genomic_DNA"/>
</dbReference>
<dbReference type="CCDS" id="CCDS61575.1">
    <molecule id="I6L899-1"/>
</dbReference>
<dbReference type="RefSeq" id="NP_001269413.1">
    <molecule id="I6L899-1"/>
    <property type="nucleotide sequence ID" value="NM_001282484.1"/>
</dbReference>
<dbReference type="SMR" id="I6L899"/>
<dbReference type="BioGRID" id="3190633">
    <property type="interactions" value="8"/>
</dbReference>
<dbReference type="FunCoup" id="I6L899">
    <property type="interactions" value="59"/>
</dbReference>
<dbReference type="IntAct" id="I6L899">
    <property type="interactions" value="2"/>
</dbReference>
<dbReference type="STRING" id="9606.ENSP00000323217"/>
<dbReference type="GlyGen" id="I6L899">
    <property type="glycosylation" value="1 site"/>
</dbReference>
<dbReference type="iPTMnet" id="I6L899"/>
<dbReference type="PhosphoSitePlus" id="I6L899"/>
<dbReference type="BioMuta" id="GOLGA8R"/>
<dbReference type="jPOST" id="I6L899"/>
<dbReference type="MassIVE" id="I6L899"/>
<dbReference type="PaxDb" id="9606-ENSP00000323217"/>
<dbReference type="PeptideAtlas" id="I6L899"/>
<dbReference type="Antibodypedia" id="77921">
    <property type="antibodies" value="1 antibodies from 1 providers"/>
</dbReference>
<dbReference type="DNASU" id="101059918"/>
<dbReference type="Ensembl" id="ENST00000327271.11">
    <molecule id="I6L899-1"/>
    <property type="protein sequence ID" value="ENSP00000323217.10"/>
    <property type="gene ID" value="ENSG00000186399.11"/>
</dbReference>
<dbReference type="GeneID" id="101059918"/>
<dbReference type="KEGG" id="hsa:101059918"/>
<dbReference type="MANE-Select" id="ENST00000327271.11">
    <property type="protein sequence ID" value="ENSP00000323217.10"/>
    <property type="RefSeq nucleotide sequence ID" value="NM_001282484.1"/>
    <property type="RefSeq protein sequence ID" value="NP_001269413.1"/>
</dbReference>
<dbReference type="UCSC" id="uc021shi.3">
    <molecule id="I6L899-1"/>
    <property type="organism name" value="human"/>
</dbReference>
<dbReference type="AGR" id="HGNC:44407"/>
<dbReference type="CTD" id="101059918"/>
<dbReference type="GeneCards" id="GOLGA8R"/>
<dbReference type="HGNC" id="HGNC:44407">
    <property type="gene designation" value="GOLGA8R"/>
</dbReference>
<dbReference type="HPA" id="ENSG00000186399">
    <property type="expression patterns" value="Low tissue specificity"/>
</dbReference>
<dbReference type="neXtProt" id="NX_I6L899"/>
<dbReference type="OpenTargets" id="ENSG00000186399"/>
<dbReference type="VEuPathDB" id="HostDB:ENSG00000186399"/>
<dbReference type="eggNOG" id="KOG4725">
    <property type="taxonomic scope" value="Eukaryota"/>
</dbReference>
<dbReference type="GeneTree" id="ENSGT00530000062932"/>
<dbReference type="HOGENOM" id="CLU_012403_1_2_1"/>
<dbReference type="InParanoid" id="I6L899"/>
<dbReference type="OrthoDB" id="16771at9604"/>
<dbReference type="PAN-GO" id="I6L899">
    <property type="GO annotations" value="4 GO annotations based on evolutionary models"/>
</dbReference>
<dbReference type="PhylomeDB" id="I6L899"/>
<dbReference type="PathwayCommons" id="I6L899"/>
<dbReference type="Reactome" id="R-HSA-9013148">
    <property type="pathway name" value="CDC42 GTPase cycle"/>
</dbReference>
<dbReference type="Reactome" id="R-HSA-9013405">
    <property type="pathway name" value="RHOD GTPase cycle"/>
</dbReference>
<dbReference type="SignaLink" id="I6L899"/>
<dbReference type="BioGRID-ORCS" id="101059918">
    <property type="hits" value="99 hits in 907 CRISPR screens"/>
</dbReference>
<dbReference type="GenomeRNAi" id="101059918"/>
<dbReference type="Pharos" id="I6L899">
    <property type="development level" value="Tdark"/>
</dbReference>
<dbReference type="PRO" id="PR:I6L899"/>
<dbReference type="Proteomes" id="UP000005640">
    <property type="component" value="Chromosome 15"/>
</dbReference>
<dbReference type="RNAct" id="I6L899">
    <property type="molecule type" value="protein"/>
</dbReference>
<dbReference type="Bgee" id="ENSG00000186399">
    <property type="expression patterns" value="Expressed in sural nerve and 99 other cell types or tissues"/>
</dbReference>
<dbReference type="GO" id="GO:0005801">
    <property type="term" value="C:cis-Golgi network"/>
    <property type="evidence" value="ECO:0000318"/>
    <property type="project" value="GO_Central"/>
</dbReference>
<dbReference type="GO" id="GO:0000137">
    <property type="term" value="C:Golgi cis cisterna"/>
    <property type="evidence" value="ECO:0000318"/>
    <property type="project" value="GO_Central"/>
</dbReference>
<dbReference type="GO" id="GO:0032580">
    <property type="term" value="C:Golgi cisterna membrane"/>
    <property type="evidence" value="ECO:0000318"/>
    <property type="project" value="GO_Central"/>
</dbReference>
<dbReference type="GO" id="GO:0007030">
    <property type="term" value="P:Golgi organization"/>
    <property type="evidence" value="ECO:0000318"/>
    <property type="project" value="GO_Central"/>
</dbReference>
<dbReference type="InterPro" id="IPR043937">
    <property type="entry name" value="GM130_C"/>
</dbReference>
<dbReference type="InterPro" id="IPR043976">
    <property type="entry name" value="GOLGA_cons_dom"/>
</dbReference>
<dbReference type="InterPro" id="IPR024858">
    <property type="entry name" value="Golgin_A"/>
</dbReference>
<dbReference type="PANTHER" id="PTHR10881:SF62">
    <property type="entry name" value="GOLGIN SUBFAMILY A MEMBER 8H-RELATED"/>
    <property type="match status" value="1"/>
</dbReference>
<dbReference type="PANTHER" id="PTHR10881">
    <property type="entry name" value="GOLGIN SUBFAMILY A MEMBER-RELATED"/>
    <property type="match status" value="1"/>
</dbReference>
<dbReference type="Pfam" id="PF19046">
    <property type="entry name" value="GM130_C"/>
    <property type="match status" value="1"/>
</dbReference>
<dbReference type="Pfam" id="PF15070">
    <property type="entry name" value="GOLGA2L5"/>
    <property type="match status" value="2"/>
</dbReference>
<gene>
    <name evidence="5" type="primary">GOLGA8R</name>
</gene>
<organism>
    <name type="scientific">Homo sapiens</name>
    <name type="common">Human</name>
    <dbReference type="NCBI Taxonomy" id="9606"/>
    <lineage>
        <taxon>Eukaryota</taxon>
        <taxon>Metazoa</taxon>
        <taxon>Chordata</taxon>
        <taxon>Craniata</taxon>
        <taxon>Vertebrata</taxon>
        <taxon>Euteleostomi</taxon>
        <taxon>Mammalia</taxon>
        <taxon>Eutheria</taxon>
        <taxon>Euarchontoglires</taxon>
        <taxon>Primates</taxon>
        <taxon>Haplorrhini</taxon>
        <taxon>Catarrhini</taxon>
        <taxon>Hominidae</taxon>
        <taxon>Homo</taxon>
    </lineage>
</organism>
<sequence>MAEETQHNKLAAAKKKLKEYWQKNRPRVPAGVNRNRKTNGSIPETATSGGCQPPGDSATGFHREGPTSSATLKDLESPCQERAVVLDSTSVKISRLKNTIKSLKQQKKQVEHQLEEEKKANNERQKAERVLEVQIQTLIIQKEELNTDLYHMERSLRYFEEESKDLAVRLQHSLQCKGELERALSAVIATEKKKANQLSSCSKAHTEWELEQSLQDQALLKAQLTQLKESFQQLQLERDECAEHIEGERARWHQRMSKMSQEICTLKKEKQDMRWVEQLEWSLSKLKNQTAEPLPPEPPAVPSEVELQHLRKELERVAGELQSQVKNNQHISLLNRRQEERIREQEERLRKQEERLQEQHEKLRQLAKPQSVFEELNNENKSTLQLEQQVKELQEKLGEEHLEVASQQNQQLTAQLSLMALPGEGHGGEHLDSEGEEAPQPMPSVPEDPESREAMSSFMDHLKEKADLSELLKKQELRFIQYWQERCHQKIHHLLSEPGGRAKDAALGGGHHQAGAQGGDEGEAAGAAADGIAAYSNYNNGHRKFLAAAHNSADEPGPGAPAPQELGAADKHGDLREVTLTSSAQGEAREDPLLDKPTAQPIVQDHQEHPGLGSNCCVPLFCWAWLPRRRR</sequence>
<name>GOG8R_HUMAN</name>